<accession>Q2LQA6</accession>
<gene>
    <name evidence="1" type="primary">rpsH</name>
    <name type="ordered locus">SYNAS_03160</name>
    <name type="ORF">SYN_03316</name>
</gene>
<evidence type="ECO:0000255" key="1">
    <source>
        <dbReference type="HAMAP-Rule" id="MF_01302"/>
    </source>
</evidence>
<evidence type="ECO:0000305" key="2"/>
<sequence length="133" mass="14811">MGMTDPIADMLTRIRNANRVHFKSVDVVYSGVNVNIAKVLKKTGYIGGYDVKKDEKGHDVLKVYLKYPDSKRTIINDIQRVSKPGRRVYVKGDEIPKVLNGYGVAIISTSKGVITDKEAREKSVGGEVLCKVW</sequence>
<protein>
    <recommendedName>
        <fullName evidence="1">Small ribosomal subunit protein uS8</fullName>
    </recommendedName>
    <alternativeName>
        <fullName evidence="2">30S ribosomal protein S8</fullName>
    </alternativeName>
</protein>
<keyword id="KW-1185">Reference proteome</keyword>
<keyword id="KW-0687">Ribonucleoprotein</keyword>
<keyword id="KW-0689">Ribosomal protein</keyword>
<keyword id="KW-0694">RNA-binding</keyword>
<keyword id="KW-0699">rRNA-binding</keyword>
<comment type="function">
    <text evidence="1">One of the primary rRNA binding proteins, it binds directly to 16S rRNA central domain where it helps coordinate assembly of the platform of the 30S subunit.</text>
</comment>
<comment type="subunit">
    <text evidence="1">Part of the 30S ribosomal subunit. Contacts proteins S5 and S12.</text>
</comment>
<comment type="similarity">
    <text evidence="1">Belongs to the universal ribosomal protein uS8 family.</text>
</comment>
<organism>
    <name type="scientific">Syntrophus aciditrophicus (strain SB)</name>
    <dbReference type="NCBI Taxonomy" id="56780"/>
    <lineage>
        <taxon>Bacteria</taxon>
        <taxon>Pseudomonadati</taxon>
        <taxon>Thermodesulfobacteriota</taxon>
        <taxon>Syntrophia</taxon>
        <taxon>Syntrophales</taxon>
        <taxon>Syntrophaceae</taxon>
        <taxon>Syntrophus</taxon>
    </lineage>
</organism>
<dbReference type="EMBL" id="CP000252">
    <property type="protein sequence ID" value="ABC76195.1"/>
    <property type="molecule type" value="Genomic_DNA"/>
</dbReference>
<dbReference type="RefSeq" id="WP_011416229.1">
    <property type="nucleotide sequence ID" value="NC_007759.1"/>
</dbReference>
<dbReference type="SMR" id="Q2LQA6"/>
<dbReference type="FunCoup" id="Q2LQA6">
    <property type="interactions" value="487"/>
</dbReference>
<dbReference type="STRING" id="56780.SYN_03316"/>
<dbReference type="KEGG" id="sat:SYN_03316"/>
<dbReference type="eggNOG" id="COG0096">
    <property type="taxonomic scope" value="Bacteria"/>
</dbReference>
<dbReference type="HOGENOM" id="CLU_098428_0_2_7"/>
<dbReference type="InParanoid" id="Q2LQA6"/>
<dbReference type="OrthoDB" id="9802617at2"/>
<dbReference type="Proteomes" id="UP000001933">
    <property type="component" value="Chromosome"/>
</dbReference>
<dbReference type="GO" id="GO:1990904">
    <property type="term" value="C:ribonucleoprotein complex"/>
    <property type="evidence" value="ECO:0007669"/>
    <property type="project" value="UniProtKB-KW"/>
</dbReference>
<dbReference type="GO" id="GO:0005840">
    <property type="term" value="C:ribosome"/>
    <property type="evidence" value="ECO:0007669"/>
    <property type="project" value="UniProtKB-KW"/>
</dbReference>
<dbReference type="GO" id="GO:0019843">
    <property type="term" value="F:rRNA binding"/>
    <property type="evidence" value="ECO:0007669"/>
    <property type="project" value="UniProtKB-UniRule"/>
</dbReference>
<dbReference type="GO" id="GO:0003735">
    <property type="term" value="F:structural constituent of ribosome"/>
    <property type="evidence" value="ECO:0007669"/>
    <property type="project" value="InterPro"/>
</dbReference>
<dbReference type="GO" id="GO:0006412">
    <property type="term" value="P:translation"/>
    <property type="evidence" value="ECO:0007669"/>
    <property type="project" value="UniProtKB-UniRule"/>
</dbReference>
<dbReference type="FunFam" id="3.30.1370.30:FF:000002">
    <property type="entry name" value="30S ribosomal protein S8"/>
    <property type="match status" value="1"/>
</dbReference>
<dbReference type="FunFam" id="3.30.1490.10:FF:000001">
    <property type="entry name" value="30S ribosomal protein S8"/>
    <property type="match status" value="1"/>
</dbReference>
<dbReference type="Gene3D" id="3.30.1370.30">
    <property type="match status" value="1"/>
</dbReference>
<dbReference type="Gene3D" id="3.30.1490.10">
    <property type="match status" value="1"/>
</dbReference>
<dbReference type="HAMAP" id="MF_01302_B">
    <property type="entry name" value="Ribosomal_uS8_B"/>
    <property type="match status" value="1"/>
</dbReference>
<dbReference type="InterPro" id="IPR000630">
    <property type="entry name" value="Ribosomal_uS8"/>
</dbReference>
<dbReference type="InterPro" id="IPR047863">
    <property type="entry name" value="Ribosomal_uS8_CS"/>
</dbReference>
<dbReference type="InterPro" id="IPR035987">
    <property type="entry name" value="Ribosomal_uS8_sf"/>
</dbReference>
<dbReference type="NCBIfam" id="NF001109">
    <property type="entry name" value="PRK00136.1"/>
    <property type="match status" value="1"/>
</dbReference>
<dbReference type="PANTHER" id="PTHR11758">
    <property type="entry name" value="40S RIBOSOMAL PROTEIN S15A"/>
    <property type="match status" value="1"/>
</dbReference>
<dbReference type="Pfam" id="PF00410">
    <property type="entry name" value="Ribosomal_S8"/>
    <property type="match status" value="1"/>
</dbReference>
<dbReference type="SUPFAM" id="SSF56047">
    <property type="entry name" value="Ribosomal protein S8"/>
    <property type="match status" value="1"/>
</dbReference>
<dbReference type="PROSITE" id="PS00053">
    <property type="entry name" value="RIBOSOMAL_S8"/>
    <property type="match status" value="1"/>
</dbReference>
<feature type="chain" id="PRO_0000290956" description="Small ribosomal subunit protein uS8">
    <location>
        <begin position="1"/>
        <end position="133"/>
    </location>
</feature>
<name>RS8_SYNAS</name>
<proteinExistence type="inferred from homology"/>
<reference key="1">
    <citation type="journal article" date="2007" name="Proc. Natl. Acad. Sci. U.S.A.">
        <title>The genome of Syntrophus aciditrophicus: life at the thermodynamic limit of microbial growth.</title>
        <authorList>
            <person name="McInerney M.J."/>
            <person name="Rohlin L."/>
            <person name="Mouttaki H."/>
            <person name="Kim U."/>
            <person name="Krupp R.S."/>
            <person name="Rios-Hernandez L."/>
            <person name="Sieber J."/>
            <person name="Struchtemeyer C.G."/>
            <person name="Bhattacharyya A."/>
            <person name="Campbell J.W."/>
            <person name="Gunsalus R.P."/>
        </authorList>
    </citation>
    <scope>NUCLEOTIDE SEQUENCE [LARGE SCALE GENOMIC DNA]</scope>
    <source>
        <strain>SB</strain>
    </source>
</reference>